<organism>
    <name type="scientific">Bos taurus</name>
    <name type="common">Bovine</name>
    <dbReference type="NCBI Taxonomy" id="9913"/>
    <lineage>
        <taxon>Eukaryota</taxon>
        <taxon>Metazoa</taxon>
        <taxon>Chordata</taxon>
        <taxon>Craniata</taxon>
        <taxon>Vertebrata</taxon>
        <taxon>Euteleostomi</taxon>
        <taxon>Mammalia</taxon>
        <taxon>Eutheria</taxon>
        <taxon>Laurasiatheria</taxon>
        <taxon>Artiodactyla</taxon>
        <taxon>Ruminantia</taxon>
        <taxon>Pecora</taxon>
        <taxon>Bovidae</taxon>
        <taxon>Bovinae</taxon>
        <taxon>Bos</taxon>
    </lineage>
</organism>
<protein>
    <recommendedName>
        <fullName evidence="1">Leucine-rich repeat-containing protein 14</fullName>
    </recommendedName>
</protein>
<sequence>MHTLVFLSTRQVLQCQSAACQALPLLPRELFPLLFKVAFMDKKTVVLRELVHTWPFPLLSFQQLLQECAHCSRALLQERPSTESMQAVILGLTARLHTPETEPGTQPLCRKHTLRVLDMTGLLDDGVEQDPGTMSMWDCTAAVARTCIEQQQGRTAEPGQAPVPVEVRVDLRVNRASYAFLREALRSSVGSPLRLCCRDLRAEDLPMRNTVALLQLLDAGCLRRVDLRFNNLGLRGLSVIIPHVARFQHLASLRLHYVHGDSRQPSVDGEDNFRYFLAQMGRFTCLRELSMGSSLLSGRLDQLLSTLQSPLESLELAFCALLPEDLRFLARSSHAVHLKKLDLSGNDLSGSQLEPFQGLLQAAAATLLHLELTECQLADTQLLATLPVLTRCASLRYLGLYGNPLSVAGLRELLRDSVVQAELRTVVHPFPVDCYEGLPWPPPASVLLEASINEEKFARVEAELHQLLLASGRAHVLWTTDIYGRLAADYFSL</sequence>
<dbReference type="EMBL" id="BC142136">
    <property type="protein sequence ID" value="AAI42137.1"/>
    <property type="molecule type" value="mRNA"/>
</dbReference>
<dbReference type="RefSeq" id="NP_001095849.1">
    <property type="nucleotide sequence ID" value="NM_001102379.1"/>
</dbReference>
<dbReference type="RefSeq" id="XP_015329847.1">
    <property type="nucleotide sequence ID" value="XM_015474361.1"/>
</dbReference>
<dbReference type="RefSeq" id="XP_015329848.1">
    <property type="nucleotide sequence ID" value="XM_015474362.1"/>
</dbReference>
<dbReference type="RefSeq" id="XP_015329849.1">
    <property type="nucleotide sequence ID" value="XM_015474363.1"/>
</dbReference>
<dbReference type="RefSeq" id="XP_059749309.1">
    <property type="nucleotide sequence ID" value="XM_059893326.1"/>
</dbReference>
<dbReference type="RefSeq" id="XP_059749310.1">
    <property type="nucleotide sequence ID" value="XM_059893327.1"/>
</dbReference>
<dbReference type="RefSeq" id="XP_059749312.1">
    <property type="nucleotide sequence ID" value="XM_059893329.1"/>
</dbReference>
<dbReference type="SMR" id="A5PJJ5"/>
<dbReference type="FunCoup" id="A5PJJ5">
    <property type="interactions" value="3072"/>
</dbReference>
<dbReference type="STRING" id="9913.ENSBTAP00000060875"/>
<dbReference type="PaxDb" id="9913-ENSBTAP00000006542"/>
<dbReference type="Ensembl" id="ENSBTAT00000006542.6">
    <property type="protein sequence ID" value="ENSBTAP00000006542.4"/>
    <property type="gene ID" value="ENSBTAG00000004969.6"/>
</dbReference>
<dbReference type="GeneID" id="539952"/>
<dbReference type="KEGG" id="bta:539952"/>
<dbReference type="CTD" id="9684"/>
<dbReference type="VEuPathDB" id="HostDB:ENSBTAG00000004969"/>
<dbReference type="VGNC" id="VGNC:30999">
    <property type="gene designation" value="LRRC14"/>
</dbReference>
<dbReference type="eggNOG" id="ENOG502QWSJ">
    <property type="taxonomic scope" value="Eukaryota"/>
</dbReference>
<dbReference type="GeneTree" id="ENSGT01030000234531"/>
<dbReference type="HOGENOM" id="CLU_039635_0_1_1"/>
<dbReference type="InParanoid" id="A5PJJ5"/>
<dbReference type="OMA" id="VTECELM"/>
<dbReference type="OrthoDB" id="6479713at2759"/>
<dbReference type="TreeFam" id="TF332708"/>
<dbReference type="Reactome" id="R-BTA-9758274">
    <property type="pathway name" value="Regulation of NF-kappa B signaling"/>
</dbReference>
<dbReference type="Proteomes" id="UP000009136">
    <property type="component" value="Chromosome 14"/>
</dbReference>
<dbReference type="Bgee" id="ENSBTAG00000004969">
    <property type="expression patterns" value="Expressed in retina and 104 other cell types or tissues"/>
</dbReference>
<dbReference type="GO" id="GO:0005737">
    <property type="term" value="C:cytoplasm"/>
    <property type="evidence" value="ECO:0000250"/>
    <property type="project" value="UniProtKB"/>
</dbReference>
<dbReference type="GO" id="GO:0019900">
    <property type="term" value="F:kinase binding"/>
    <property type="evidence" value="ECO:0000318"/>
    <property type="project" value="GO_Central"/>
</dbReference>
<dbReference type="GO" id="GO:0032088">
    <property type="term" value="P:negative regulation of NF-kappaB transcription factor activity"/>
    <property type="evidence" value="ECO:0000250"/>
    <property type="project" value="UniProtKB"/>
</dbReference>
<dbReference type="GO" id="GO:0034122">
    <property type="term" value="P:negative regulation of toll-like receptor signaling pathway"/>
    <property type="evidence" value="ECO:0000250"/>
    <property type="project" value="UniProtKB"/>
</dbReference>
<dbReference type="FunFam" id="3.80.10.10:FF:000119">
    <property type="entry name" value="Leucine-rich repeat-containing 14 isoform b"/>
    <property type="match status" value="1"/>
</dbReference>
<dbReference type="Gene3D" id="3.80.10.10">
    <property type="entry name" value="Ribonuclease Inhibitor"/>
    <property type="match status" value="1"/>
</dbReference>
<dbReference type="InterPro" id="IPR001611">
    <property type="entry name" value="Leu-rich_rpt"/>
</dbReference>
<dbReference type="InterPro" id="IPR032675">
    <property type="entry name" value="LRR_dom_sf"/>
</dbReference>
<dbReference type="InterPro" id="IPR050694">
    <property type="entry name" value="PRAME_domain"/>
</dbReference>
<dbReference type="PANTHER" id="PTHR14224:SF9">
    <property type="entry name" value="LEUCINE-RICH REPEAT-CONTAINING PROTEIN 14"/>
    <property type="match status" value="1"/>
</dbReference>
<dbReference type="PANTHER" id="PTHR14224">
    <property type="entry name" value="SIMILAR TO PREFERENTIALLY EXPRESSED ANTIGEN IN MELANOMA-LIKE 3"/>
    <property type="match status" value="1"/>
</dbReference>
<dbReference type="Pfam" id="PF13516">
    <property type="entry name" value="LRR_6"/>
    <property type="match status" value="2"/>
</dbReference>
<dbReference type="SUPFAM" id="SSF52047">
    <property type="entry name" value="RNI-like"/>
    <property type="match status" value="1"/>
</dbReference>
<comment type="function">
    <text evidence="1">Negatively regulates Toll-like receptor-mediated NF-kappa-B signaling by disrupting IKK core complex formation through interaction with IKBKB.</text>
</comment>
<comment type="subunit">
    <text evidence="1">Interacts with IKBKB; disrupts IKBKB-IKBKG interaction preventing I-kappa-B-kinase (IKK) core complex formation and leading to a decrease of IKBKB phosphorylation and NF-kappaB activation. Interacts with CHUK.</text>
</comment>
<comment type="subcellular location">
    <subcellularLocation>
        <location evidence="1">Cytoplasm</location>
    </subcellularLocation>
</comment>
<comment type="similarity">
    <text evidence="3">Belongs to the PRAME family. LRRC14 subfamily.</text>
</comment>
<keyword id="KW-0963">Cytoplasm</keyword>
<keyword id="KW-0433">Leucine-rich repeat</keyword>
<keyword id="KW-1185">Reference proteome</keyword>
<keyword id="KW-0677">Repeat</keyword>
<name>LRC14_BOVIN</name>
<proteinExistence type="evidence at transcript level"/>
<reference key="1">
    <citation type="submission" date="2007-06" db="EMBL/GenBank/DDBJ databases">
        <authorList>
            <consortium name="NIH - Mammalian Gene Collection (MGC) project"/>
        </authorList>
    </citation>
    <scope>NUCLEOTIDE SEQUENCE [LARGE SCALE MRNA]</scope>
    <source>
        <strain>Hereford</strain>
        <tissue>Fetal skin</tissue>
    </source>
</reference>
<evidence type="ECO:0000250" key="1">
    <source>
        <dbReference type="UniProtKB" id="Q15048"/>
    </source>
</evidence>
<evidence type="ECO:0000250" key="2">
    <source>
        <dbReference type="UniProtKB" id="Q3UWY1"/>
    </source>
</evidence>
<evidence type="ECO:0000305" key="3"/>
<accession>A5PJJ5</accession>
<feature type="chain" id="PRO_0000343680" description="Leucine-rich repeat-containing protein 14">
    <location>
        <begin position="1"/>
        <end position="493"/>
    </location>
</feature>
<feature type="repeat" description="LRR 1; degenerate" evidence="2">
    <location>
        <begin position="111"/>
        <end position="146"/>
    </location>
</feature>
<feature type="repeat" description="LRR 2; degenerate" evidence="2">
    <location>
        <begin position="194"/>
        <end position="218"/>
    </location>
</feature>
<feature type="repeat" description="LRR 3; degenerate" evidence="2">
    <location>
        <begin position="219"/>
        <end position="246"/>
    </location>
</feature>
<feature type="repeat" description="LRR 4; degenerate" evidence="2">
    <location>
        <begin position="247"/>
        <end position="282"/>
    </location>
</feature>
<feature type="repeat" description="LRR 5" evidence="2">
    <location>
        <begin position="283"/>
        <end position="307"/>
    </location>
</feature>
<feature type="repeat" description="LRR 6" evidence="2">
    <location>
        <begin position="308"/>
        <end position="339"/>
    </location>
</feature>
<feature type="repeat" description="LRR 7" evidence="2">
    <location>
        <begin position="340"/>
        <end position="360"/>
    </location>
</feature>
<feature type="repeat" description="LRR 8" evidence="2">
    <location>
        <begin position="364"/>
        <end position="391"/>
    </location>
</feature>
<feature type="repeat" description="LRR 9" evidence="2">
    <location>
        <begin position="392"/>
        <end position="416"/>
    </location>
</feature>
<gene>
    <name evidence="1" type="primary">LRRC14</name>
</gene>